<keyword id="KW-1284">Encapsulin nanocompartment</keyword>
<keyword id="KW-0285">Flavoprotein</keyword>
<keyword id="KW-0288">FMN</keyword>
<keyword id="KW-0406">Ion transport</keyword>
<keyword id="KW-0408">Iron</keyword>
<keyword id="KW-0409">Iron storage</keyword>
<keyword id="KW-0410">Iron transport</keyword>
<keyword id="KW-0813">Transport</keyword>
<feature type="chain" id="PRO_0000343952" description="Type 1 encapsulin shell protein">
    <location>
        <begin position="1"/>
        <end position="265"/>
    </location>
</feature>
<feature type="region of interest" description="Pore-forming loop" evidence="1">
    <location>
        <begin position="184"/>
        <end position="189"/>
    </location>
</feature>
<feature type="binding site" evidence="1">
    <location>
        <begin position="79"/>
        <end position="81"/>
    </location>
    <ligand>
        <name>FMN</name>
        <dbReference type="ChEBI" id="CHEBI:58210"/>
    </ligand>
</feature>
<feature type="binding site" evidence="1">
    <location>
        <position position="87"/>
    </location>
    <ligand>
        <name>FMN</name>
        <dbReference type="ChEBI" id="CHEBI:58210"/>
    </ligand>
</feature>
<feature type="binding site" evidence="1">
    <location>
        <position position="235"/>
    </location>
    <ligand>
        <name>FMN</name>
        <dbReference type="ChEBI" id="CHEBI:58210"/>
    </ligand>
</feature>
<organism>
    <name type="scientific">Thermotoga sp. (strain RQ2)</name>
    <dbReference type="NCBI Taxonomy" id="126740"/>
    <lineage>
        <taxon>Bacteria</taxon>
        <taxon>Thermotogati</taxon>
        <taxon>Thermotogota</taxon>
        <taxon>Thermotogae</taxon>
        <taxon>Thermotogales</taxon>
        <taxon>Thermotogaceae</taxon>
        <taxon>Thermotoga</taxon>
    </lineage>
</organism>
<sequence>MEFLKRSFAPLTEKQWQEIDNRAREIFKTQLYGRKFVDVEGPYGWEYAAHPLGEVEVLSDENEVVKWGLRKSLPLIELRATFTLDLWELDNLERGKPNVDLSSLEETVRKVAEFEDEVIFRGCEKSGVKGLLSFEERKIECGSTPKDLLEAIVRALSIFSKDGIEGPYTLVINTDRWINFLKEEAGHYPLEKRVEECLRGGKIITTPRIEDALVVSERGGDFKLILGQDLSIGYEDREKDAVRLFITETFTFQVVNPEALILLKF</sequence>
<proteinExistence type="inferred from homology"/>
<accession>B1L7S2</accession>
<name>ENCAP_THESQ</name>
<protein>
    <recommendedName>
        <fullName evidence="1">Type 1 encapsulin shell protein</fullName>
    </recommendedName>
    <alternativeName>
        <fullName>Maritimacin</fullName>
    </alternativeName>
</protein>
<gene>
    <name evidence="2" type="primary">enc</name>
    <name type="ordered locus">TRQ2_0142</name>
</gene>
<reference key="1">
    <citation type="journal article" date="2011" name="J. Bacteriol.">
        <title>Genome sequence of Thermotoga sp. strain RQ2, a hyperthermophilic bacterium isolated from a geothermally heated region of the seafloor near Ribeira Quente, the Azores.</title>
        <authorList>
            <person name="Swithers K.S."/>
            <person name="DiPippo J.L."/>
            <person name="Bruce D.C."/>
            <person name="Detter C."/>
            <person name="Tapia R."/>
            <person name="Han S."/>
            <person name="Saunders E."/>
            <person name="Goodwin L.A."/>
            <person name="Han J."/>
            <person name="Woyke T."/>
            <person name="Pitluck S."/>
            <person name="Pennacchio L."/>
            <person name="Nolan M."/>
            <person name="Mikhailova N."/>
            <person name="Lykidis A."/>
            <person name="Land M.L."/>
            <person name="Brettin T."/>
            <person name="Stetter K.O."/>
            <person name="Nelson K.E."/>
            <person name="Gogarten J.P."/>
            <person name="Noll K.M."/>
        </authorList>
    </citation>
    <scope>NUCLEOTIDE SEQUENCE [LARGE SCALE GENOMIC DNA]</scope>
    <source>
        <strain>RQ2</strain>
    </source>
</reference>
<reference key="2">
    <citation type="journal article" date="2021" name="Nat. Commun.">
        <title>Large-scale computational discovery and analysis of virus-derived microbial nanocompartments.</title>
        <authorList>
            <person name="Andreas M.P."/>
            <person name="Giessen T.W."/>
        </authorList>
    </citation>
    <scope>CLASSIFICATION</scope>
</reference>
<evidence type="ECO:0000250" key="1">
    <source>
        <dbReference type="UniProtKB" id="Q9WZP2"/>
    </source>
</evidence>
<evidence type="ECO:0000305" key="2"/>
<dbReference type="EMBL" id="CP000969">
    <property type="protein sequence ID" value="ACB08503.1"/>
    <property type="molecule type" value="Genomic_DNA"/>
</dbReference>
<dbReference type="RefSeq" id="WP_004080898.1">
    <property type="nucleotide sequence ID" value="NC_010483.1"/>
</dbReference>
<dbReference type="SMR" id="B1L7S2"/>
<dbReference type="MEROPS" id="U56.001"/>
<dbReference type="KEGG" id="trq:TRQ2_0142"/>
<dbReference type="HOGENOM" id="CLU_089875_1_0_0"/>
<dbReference type="Proteomes" id="UP000001687">
    <property type="component" value="Chromosome"/>
</dbReference>
<dbReference type="GO" id="GO:0140737">
    <property type="term" value="C:encapsulin nanocompartment"/>
    <property type="evidence" value="ECO:0007669"/>
    <property type="project" value="UniProtKB-SubCell"/>
</dbReference>
<dbReference type="GO" id="GO:0006879">
    <property type="term" value="P:intracellular iron ion homeostasis"/>
    <property type="evidence" value="ECO:0007669"/>
    <property type="project" value="UniProtKB-KW"/>
</dbReference>
<dbReference type="GO" id="GO:0006826">
    <property type="term" value="P:iron ion transport"/>
    <property type="evidence" value="ECO:0007669"/>
    <property type="project" value="UniProtKB-KW"/>
</dbReference>
<dbReference type="Gene3D" id="3.30.2400.30">
    <property type="match status" value="1"/>
</dbReference>
<dbReference type="Gene3D" id="3.30.2320.10">
    <property type="entry name" value="hypothetical protein PF0899 domain"/>
    <property type="match status" value="1"/>
</dbReference>
<dbReference type="InterPro" id="IPR007544">
    <property type="entry name" value="ENCAP"/>
</dbReference>
<dbReference type="InterPro" id="IPR051429">
    <property type="entry name" value="Encapsulin_nc"/>
</dbReference>
<dbReference type="NCBIfam" id="NF041155">
    <property type="entry name" value="encap_f1"/>
    <property type="match status" value="1"/>
</dbReference>
<dbReference type="PANTHER" id="PTHR37165">
    <property type="entry name" value="PEPTIDASE U56 FAMILY"/>
    <property type="match status" value="1"/>
</dbReference>
<dbReference type="PANTHER" id="PTHR37165:SF1">
    <property type="entry name" value="TYPE 1 ENCAPSULIN SHELL PROTEIN"/>
    <property type="match status" value="1"/>
</dbReference>
<dbReference type="Pfam" id="PF04454">
    <property type="entry name" value="Linocin_M18"/>
    <property type="match status" value="1"/>
</dbReference>
<dbReference type="PIRSF" id="PIRSF019254">
    <property type="entry name" value="CFP29"/>
    <property type="match status" value="1"/>
</dbReference>
<comment type="function">
    <text evidence="1">Shell component of a type 1 encapsulin nanocompartment. Assembles into proteinaceous shells 23-24 nm in diameter with 2-2.5 nm thick walls. Cargo protein Flp (ferritin-like protein, may store iron) is targeted to the interior via its C-terminal extension.</text>
</comment>
<comment type="subunit">
    <text evidence="1">This encapsulin nanocompartment is formed by 60 subunits; monomers form pentamers which assemble to form shells. There are 12 pores where the pentamers meet as well as 3-fold axis channels and dimer channels; none are larger than 3-4 Angstroms in diameter. The N-terminus of the protein is inside the shell, the C-terminus is outside.</text>
</comment>
<comment type="subcellular location">
    <subcellularLocation>
        <location evidence="1">Encapsulin nanocompartment</location>
    </subcellularLocation>
</comment>
<comment type="similarity">
    <text evidence="2">Belongs to the encapsulin family. Family 1 subfamily.</text>
</comment>